<sequence length="232" mass="25154">MKKVLFYVLPFAFFGCSATVDPQISMKPPAYVEELAPKQSNNVESAPGSLFGKGDNPLFSDKKAMNVNDLVTVVIQESTTQSTQANKATSRTNTSNLGGGALTGSSGVVANALNKVNAYSNIGFQTNSSNNYTGTGSQSRNESFNTTISTRVIKILSNGNYFIEGSRELLINGEKQIIQLSGVIRPYDIGQDNTIDSKYIADAKILYKTEGEVDRSTRKPWGSKVIEAIWPF</sequence>
<name>FLGH_CAMJE</name>
<feature type="signal peptide" evidence="2">
    <location>
        <begin position="1"/>
        <end position="15"/>
    </location>
</feature>
<feature type="chain" id="PRO_0000009436" description="Flagellar L-ring protein">
    <location>
        <begin position="16"/>
        <end position="232"/>
    </location>
</feature>
<feature type="lipid moiety-binding region" description="N-palmitoyl cysteine" evidence="2">
    <location>
        <position position="16"/>
    </location>
</feature>
<feature type="lipid moiety-binding region" description="S-diacylglycerol cysteine" evidence="2">
    <location>
        <position position="16"/>
    </location>
</feature>
<comment type="function">
    <text evidence="1">Assembles around the rod to form the L-ring and probably protects the motor/basal body from shearing forces during rotation.</text>
</comment>
<comment type="subunit">
    <text evidence="1">The basal body constitutes a major portion of the flagellar organelle and consists of four rings (L,P,S, and M) mounted on a central rod.</text>
</comment>
<comment type="subcellular location">
    <subcellularLocation>
        <location evidence="1">Cell outer membrane</location>
        <topology evidence="1">Lipid-anchor</topology>
    </subcellularLocation>
    <subcellularLocation>
        <location evidence="1">Bacterial flagellum basal body</location>
    </subcellularLocation>
</comment>
<comment type="similarity">
    <text evidence="3">Belongs to the FlgH family.</text>
</comment>
<reference key="1">
    <citation type="journal article" date="2000" name="Nature">
        <title>The genome sequence of the food-borne pathogen Campylobacter jejuni reveals hypervariable sequences.</title>
        <authorList>
            <person name="Parkhill J."/>
            <person name="Wren B.W."/>
            <person name="Mungall K.L."/>
            <person name="Ketley J.M."/>
            <person name="Churcher C.M."/>
            <person name="Basham D."/>
            <person name="Chillingworth T."/>
            <person name="Davies R.M."/>
            <person name="Feltwell T."/>
            <person name="Holroyd S."/>
            <person name="Jagels K."/>
            <person name="Karlyshev A.V."/>
            <person name="Moule S."/>
            <person name="Pallen M.J."/>
            <person name="Penn C.W."/>
            <person name="Quail M.A."/>
            <person name="Rajandream M.A."/>
            <person name="Rutherford K.M."/>
            <person name="van Vliet A.H.M."/>
            <person name="Whitehead S."/>
            <person name="Barrell B.G."/>
        </authorList>
    </citation>
    <scope>NUCLEOTIDE SEQUENCE [LARGE SCALE GENOMIC DNA]</scope>
    <source>
        <strain>ATCC 700819 / NCTC 11168</strain>
    </source>
</reference>
<dbReference type="EMBL" id="AL111168">
    <property type="protein sequence ID" value="CAL34824.1"/>
    <property type="molecule type" value="Genomic_DNA"/>
</dbReference>
<dbReference type="PIR" id="B81339">
    <property type="entry name" value="B81339"/>
</dbReference>
<dbReference type="RefSeq" id="WP_002864738.1">
    <property type="nucleotide sequence ID" value="NZ_SZUC01000002.1"/>
</dbReference>
<dbReference type="RefSeq" id="YP_002344105.1">
    <property type="nucleotide sequence ID" value="NC_002163.1"/>
</dbReference>
<dbReference type="SMR" id="Q9PPM0"/>
<dbReference type="IntAct" id="Q9PPM0">
    <property type="interactions" value="1"/>
</dbReference>
<dbReference type="STRING" id="192222.Cj0687c"/>
<dbReference type="PaxDb" id="192222-Cj0687c"/>
<dbReference type="EnsemblBacteria" id="CAL34824">
    <property type="protein sequence ID" value="CAL34824"/>
    <property type="gene ID" value="Cj0687c"/>
</dbReference>
<dbReference type="GeneID" id="905006"/>
<dbReference type="KEGG" id="cje:Cj0687c"/>
<dbReference type="PATRIC" id="fig|192222.6.peg.679"/>
<dbReference type="eggNOG" id="COG2063">
    <property type="taxonomic scope" value="Bacteria"/>
</dbReference>
<dbReference type="HOGENOM" id="CLU_069313_1_1_7"/>
<dbReference type="OrthoDB" id="9789227at2"/>
<dbReference type="PRO" id="PR:Q9PPM0"/>
<dbReference type="Proteomes" id="UP000000799">
    <property type="component" value="Chromosome"/>
</dbReference>
<dbReference type="GO" id="GO:0009427">
    <property type="term" value="C:bacterial-type flagellum basal body, distal rod, L ring"/>
    <property type="evidence" value="ECO:0007669"/>
    <property type="project" value="InterPro"/>
</dbReference>
<dbReference type="GO" id="GO:0009279">
    <property type="term" value="C:cell outer membrane"/>
    <property type="evidence" value="ECO:0007669"/>
    <property type="project" value="UniProtKB-SubCell"/>
</dbReference>
<dbReference type="GO" id="GO:0003774">
    <property type="term" value="F:cytoskeletal motor activity"/>
    <property type="evidence" value="ECO:0007669"/>
    <property type="project" value="InterPro"/>
</dbReference>
<dbReference type="GO" id="GO:0071973">
    <property type="term" value="P:bacterial-type flagellum-dependent cell motility"/>
    <property type="evidence" value="ECO:0007669"/>
    <property type="project" value="InterPro"/>
</dbReference>
<dbReference type="HAMAP" id="MF_00415">
    <property type="entry name" value="FlgH"/>
    <property type="match status" value="1"/>
</dbReference>
<dbReference type="InterPro" id="IPR000527">
    <property type="entry name" value="Flag_Lring"/>
</dbReference>
<dbReference type="NCBIfam" id="NF001303">
    <property type="entry name" value="PRK00249.1-3"/>
    <property type="match status" value="1"/>
</dbReference>
<dbReference type="PANTHER" id="PTHR34933">
    <property type="entry name" value="FLAGELLAR L-RING PROTEIN"/>
    <property type="match status" value="1"/>
</dbReference>
<dbReference type="PANTHER" id="PTHR34933:SF1">
    <property type="entry name" value="FLAGELLAR L-RING PROTEIN"/>
    <property type="match status" value="1"/>
</dbReference>
<dbReference type="Pfam" id="PF02107">
    <property type="entry name" value="FlgH"/>
    <property type="match status" value="1"/>
</dbReference>
<dbReference type="PRINTS" id="PR01008">
    <property type="entry name" value="FLGLRINGFLGH"/>
</dbReference>
<dbReference type="PROSITE" id="PS51257">
    <property type="entry name" value="PROKAR_LIPOPROTEIN"/>
    <property type="match status" value="1"/>
</dbReference>
<evidence type="ECO:0000250" key="1"/>
<evidence type="ECO:0000255" key="2"/>
<evidence type="ECO:0000305" key="3"/>
<organism>
    <name type="scientific">Campylobacter jejuni subsp. jejuni serotype O:2 (strain ATCC 700819 / NCTC 11168)</name>
    <dbReference type="NCBI Taxonomy" id="192222"/>
    <lineage>
        <taxon>Bacteria</taxon>
        <taxon>Pseudomonadati</taxon>
        <taxon>Campylobacterota</taxon>
        <taxon>Epsilonproteobacteria</taxon>
        <taxon>Campylobacterales</taxon>
        <taxon>Campylobacteraceae</taxon>
        <taxon>Campylobacter</taxon>
    </lineage>
</organism>
<keyword id="KW-0975">Bacterial flagellum</keyword>
<keyword id="KW-0998">Cell outer membrane</keyword>
<keyword id="KW-0449">Lipoprotein</keyword>
<keyword id="KW-0472">Membrane</keyword>
<keyword id="KW-0564">Palmitate</keyword>
<keyword id="KW-1185">Reference proteome</keyword>
<keyword id="KW-0732">Signal</keyword>
<protein>
    <recommendedName>
        <fullName>Flagellar L-ring protein</fullName>
    </recommendedName>
    <alternativeName>
        <fullName>Basal body L-ring protein</fullName>
    </alternativeName>
</protein>
<gene>
    <name type="primary">flgH</name>
    <name type="ordered locus">Cj0687c</name>
</gene>
<accession>Q9PPM0</accession>
<accession>Q0PAJ2</accession>
<proteinExistence type="inferred from homology"/>